<evidence type="ECO:0000255" key="1">
    <source>
        <dbReference type="HAMAP-Rule" id="MF_01824"/>
    </source>
</evidence>
<name>PDXS_LISIN</name>
<comment type="function">
    <text evidence="1">Catalyzes the formation of pyridoxal 5'-phosphate from ribose 5-phosphate (RBP), glyceraldehyde 3-phosphate (G3P) and ammonia. The ammonia is provided by the PdxT subunit. Can also use ribulose 5-phosphate and dihydroxyacetone phosphate as substrates, resulting from enzyme-catalyzed isomerization of RBP and G3P, respectively.</text>
</comment>
<comment type="catalytic activity">
    <reaction evidence="1">
        <text>aldehydo-D-ribose 5-phosphate + D-glyceraldehyde 3-phosphate + L-glutamine = pyridoxal 5'-phosphate + L-glutamate + phosphate + 3 H2O + H(+)</text>
        <dbReference type="Rhea" id="RHEA:31507"/>
        <dbReference type="ChEBI" id="CHEBI:15377"/>
        <dbReference type="ChEBI" id="CHEBI:15378"/>
        <dbReference type="ChEBI" id="CHEBI:29985"/>
        <dbReference type="ChEBI" id="CHEBI:43474"/>
        <dbReference type="ChEBI" id="CHEBI:58273"/>
        <dbReference type="ChEBI" id="CHEBI:58359"/>
        <dbReference type="ChEBI" id="CHEBI:59776"/>
        <dbReference type="ChEBI" id="CHEBI:597326"/>
        <dbReference type="EC" id="4.3.3.6"/>
    </reaction>
</comment>
<comment type="pathway">
    <text evidence="1">Cofactor biosynthesis; pyridoxal 5'-phosphate biosynthesis.</text>
</comment>
<comment type="subunit">
    <text evidence="1">In the presence of PdxT, forms a dodecamer of heterodimers.</text>
</comment>
<comment type="similarity">
    <text evidence="1">Belongs to the PdxS/SNZ family.</text>
</comment>
<protein>
    <recommendedName>
        <fullName evidence="1">Pyridoxal 5'-phosphate synthase subunit PdxS</fullName>
        <shortName evidence="1">PLP synthase subunit PdxS</shortName>
        <ecNumber evidence="1">4.3.3.6</ecNumber>
    </recommendedName>
    <alternativeName>
        <fullName evidence="1">Pdx1</fullName>
    </alternativeName>
</protein>
<dbReference type="EC" id="4.3.3.6" evidence="1"/>
<dbReference type="EMBL" id="AL596171">
    <property type="protein sequence ID" value="CAC97434.1"/>
    <property type="molecule type" value="Genomic_DNA"/>
</dbReference>
<dbReference type="PIR" id="AB1708">
    <property type="entry name" value="AB1708"/>
</dbReference>
<dbReference type="RefSeq" id="WP_010991065.1">
    <property type="nucleotide sequence ID" value="NC_003212.1"/>
</dbReference>
<dbReference type="SMR" id="Q929R9"/>
<dbReference type="STRING" id="272626.gene:17566563"/>
<dbReference type="GeneID" id="93235545"/>
<dbReference type="KEGG" id="lin:lin2205"/>
<dbReference type="eggNOG" id="COG0214">
    <property type="taxonomic scope" value="Bacteria"/>
</dbReference>
<dbReference type="HOGENOM" id="CLU_055352_1_0_9"/>
<dbReference type="OrthoDB" id="9772545at2"/>
<dbReference type="UniPathway" id="UPA00245"/>
<dbReference type="Proteomes" id="UP000002513">
    <property type="component" value="Chromosome"/>
</dbReference>
<dbReference type="GO" id="GO:0036381">
    <property type="term" value="F:pyridoxal 5'-phosphate synthase (glutamine hydrolysing) activity"/>
    <property type="evidence" value="ECO:0007669"/>
    <property type="project" value="UniProtKB-UniRule"/>
</dbReference>
<dbReference type="GO" id="GO:0006520">
    <property type="term" value="P:amino acid metabolic process"/>
    <property type="evidence" value="ECO:0007669"/>
    <property type="project" value="TreeGrafter"/>
</dbReference>
<dbReference type="GO" id="GO:0042823">
    <property type="term" value="P:pyridoxal phosphate biosynthetic process"/>
    <property type="evidence" value="ECO:0007669"/>
    <property type="project" value="UniProtKB-UniRule"/>
</dbReference>
<dbReference type="GO" id="GO:0008615">
    <property type="term" value="P:pyridoxine biosynthetic process"/>
    <property type="evidence" value="ECO:0007669"/>
    <property type="project" value="TreeGrafter"/>
</dbReference>
<dbReference type="CDD" id="cd04727">
    <property type="entry name" value="pdxS"/>
    <property type="match status" value="1"/>
</dbReference>
<dbReference type="FunFam" id="3.20.20.70:FF:000001">
    <property type="entry name" value="Pyridoxine biosynthesis protein PDX1"/>
    <property type="match status" value="1"/>
</dbReference>
<dbReference type="Gene3D" id="3.20.20.70">
    <property type="entry name" value="Aldolase class I"/>
    <property type="match status" value="1"/>
</dbReference>
<dbReference type="HAMAP" id="MF_01824">
    <property type="entry name" value="PdxS"/>
    <property type="match status" value="1"/>
</dbReference>
<dbReference type="InterPro" id="IPR013785">
    <property type="entry name" value="Aldolase_TIM"/>
</dbReference>
<dbReference type="InterPro" id="IPR001852">
    <property type="entry name" value="PdxS/SNZ"/>
</dbReference>
<dbReference type="InterPro" id="IPR033755">
    <property type="entry name" value="PdxS/SNZ_N"/>
</dbReference>
<dbReference type="InterPro" id="IPR011060">
    <property type="entry name" value="RibuloseP-bd_barrel"/>
</dbReference>
<dbReference type="NCBIfam" id="NF003215">
    <property type="entry name" value="PRK04180.1"/>
    <property type="match status" value="1"/>
</dbReference>
<dbReference type="NCBIfam" id="TIGR00343">
    <property type="entry name" value="pyridoxal 5'-phosphate synthase lyase subunit PdxS"/>
    <property type="match status" value="1"/>
</dbReference>
<dbReference type="PANTHER" id="PTHR31829">
    <property type="entry name" value="PYRIDOXAL 5'-PHOSPHATE SYNTHASE SUBUNIT SNZ1-RELATED"/>
    <property type="match status" value="1"/>
</dbReference>
<dbReference type="PANTHER" id="PTHR31829:SF0">
    <property type="entry name" value="PYRIDOXAL 5'-PHOSPHATE SYNTHASE SUBUNIT SNZ1-RELATED"/>
    <property type="match status" value="1"/>
</dbReference>
<dbReference type="Pfam" id="PF01680">
    <property type="entry name" value="SOR_SNZ"/>
    <property type="match status" value="1"/>
</dbReference>
<dbReference type="PIRSF" id="PIRSF029271">
    <property type="entry name" value="Pdx1"/>
    <property type="match status" value="1"/>
</dbReference>
<dbReference type="SUPFAM" id="SSF51366">
    <property type="entry name" value="Ribulose-phoshate binding barrel"/>
    <property type="match status" value="1"/>
</dbReference>
<dbReference type="PROSITE" id="PS01235">
    <property type="entry name" value="PDXS_SNZ_1"/>
    <property type="match status" value="1"/>
</dbReference>
<dbReference type="PROSITE" id="PS51129">
    <property type="entry name" value="PDXS_SNZ_2"/>
    <property type="match status" value="1"/>
</dbReference>
<reference key="1">
    <citation type="journal article" date="2001" name="Science">
        <title>Comparative genomics of Listeria species.</title>
        <authorList>
            <person name="Glaser P."/>
            <person name="Frangeul L."/>
            <person name="Buchrieser C."/>
            <person name="Rusniok C."/>
            <person name="Amend A."/>
            <person name="Baquero F."/>
            <person name="Berche P."/>
            <person name="Bloecker H."/>
            <person name="Brandt P."/>
            <person name="Chakraborty T."/>
            <person name="Charbit A."/>
            <person name="Chetouani F."/>
            <person name="Couve E."/>
            <person name="de Daruvar A."/>
            <person name="Dehoux P."/>
            <person name="Domann E."/>
            <person name="Dominguez-Bernal G."/>
            <person name="Duchaud E."/>
            <person name="Durant L."/>
            <person name="Dussurget O."/>
            <person name="Entian K.-D."/>
            <person name="Fsihi H."/>
            <person name="Garcia-del Portillo F."/>
            <person name="Garrido P."/>
            <person name="Gautier L."/>
            <person name="Goebel W."/>
            <person name="Gomez-Lopez N."/>
            <person name="Hain T."/>
            <person name="Hauf J."/>
            <person name="Jackson D."/>
            <person name="Jones L.-M."/>
            <person name="Kaerst U."/>
            <person name="Kreft J."/>
            <person name="Kuhn M."/>
            <person name="Kunst F."/>
            <person name="Kurapkat G."/>
            <person name="Madueno E."/>
            <person name="Maitournam A."/>
            <person name="Mata Vicente J."/>
            <person name="Ng E."/>
            <person name="Nedjari H."/>
            <person name="Nordsiek G."/>
            <person name="Novella S."/>
            <person name="de Pablos B."/>
            <person name="Perez-Diaz J.-C."/>
            <person name="Purcell R."/>
            <person name="Remmel B."/>
            <person name="Rose M."/>
            <person name="Schlueter T."/>
            <person name="Simoes N."/>
            <person name="Tierrez A."/>
            <person name="Vazquez-Boland J.-A."/>
            <person name="Voss H."/>
            <person name="Wehland J."/>
            <person name="Cossart P."/>
        </authorList>
    </citation>
    <scope>NUCLEOTIDE SEQUENCE [LARGE SCALE GENOMIC DNA]</scope>
    <source>
        <strain>ATCC BAA-680 / CLIP 11262</strain>
    </source>
</reference>
<accession>Q929R9</accession>
<organism>
    <name type="scientific">Listeria innocua serovar 6a (strain ATCC BAA-680 / CLIP 11262)</name>
    <dbReference type="NCBI Taxonomy" id="272626"/>
    <lineage>
        <taxon>Bacteria</taxon>
        <taxon>Bacillati</taxon>
        <taxon>Bacillota</taxon>
        <taxon>Bacilli</taxon>
        <taxon>Bacillales</taxon>
        <taxon>Listeriaceae</taxon>
        <taxon>Listeria</taxon>
    </lineage>
</organism>
<keyword id="KW-0456">Lyase</keyword>
<keyword id="KW-0663">Pyridoxal phosphate</keyword>
<keyword id="KW-0704">Schiff base</keyword>
<sequence length="295" mass="31723">MEKKVGTDRVKRGMAQMQKGGVIMDVVNAEQAKIAEEAGAVAVMALERVPSDIRAAGGVARMADPRIVEEVMNAVSIPVMAKARIGHITEARVLEAMGVDYIDESEVLTPADDEFHLLKSDFTVPFVCGCRDIGEALRRIGEGAAMLRTKGEPGTGNIVEAVRHMRQVNGQIRQIASMTDDELMVAAKNFGAPYELVKEIKTLGKLPVVNFAAGGVATPADAALMMELGADGVFVGSGIFKSDNPAKFASAIVQATTYYTDYELIGKLSKELGSPMKGIEMSRLNPEDRMQDRSF</sequence>
<proteinExistence type="inferred from homology"/>
<feature type="chain" id="PRO_0000109399" description="Pyridoxal 5'-phosphate synthase subunit PdxS">
    <location>
        <begin position="1"/>
        <end position="295"/>
    </location>
</feature>
<feature type="active site" description="Schiff-base intermediate with D-ribose 5-phosphate" evidence="1">
    <location>
        <position position="82"/>
    </location>
</feature>
<feature type="binding site" evidence="1">
    <location>
        <position position="25"/>
    </location>
    <ligand>
        <name>D-ribose 5-phosphate</name>
        <dbReference type="ChEBI" id="CHEBI:78346"/>
    </ligand>
</feature>
<feature type="binding site" evidence="1">
    <location>
        <position position="154"/>
    </location>
    <ligand>
        <name>D-ribose 5-phosphate</name>
        <dbReference type="ChEBI" id="CHEBI:78346"/>
    </ligand>
</feature>
<feature type="binding site" evidence="1">
    <location>
        <position position="166"/>
    </location>
    <ligand>
        <name>D-glyceraldehyde 3-phosphate</name>
        <dbReference type="ChEBI" id="CHEBI:59776"/>
    </ligand>
</feature>
<feature type="binding site" evidence="1">
    <location>
        <position position="215"/>
    </location>
    <ligand>
        <name>D-ribose 5-phosphate</name>
        <dbReference type="ChEBI" id="CHEBI:78346"/>
    </ligand>
</feature>
<feature type="binding site" evidence="1">
    <location>
        <begin position="236"/>
        <end position="237"/>
    </location>
    <ligand>
        <name>D-ribose 5-phosphate</name>
        <dbReference type="ChEBI" id="CHEBI:78346"/>
    </ligand>
</feature>
<gene>
    <name evidence="1" type="primary">pdxS</name>
    <name type="ordered locus">lin2205</name>
</gene>